<sequence>MFYEFALIGTTASGKSSFSIELAKEIEAVILSLDSLCLYKNIDIASAKPNKNELSIIKHFGINLVYPDSHFCVGDFIKEYHKAKEFAISKNCPLIITGGSGFYLKSMLKGLSPKLEKIKIELNNDEIWSIAEKIDPNFTSKFSKNDEFRLHKWYQIYKLTNEIPTNWLVKNTSAPTIQNLKIYELNWDKEELKNRIKNRTKIMLNSGLIDEAKKLFTTYPKDIKALKSIGLKECGEYFEAKLGDIKSKEAILNLENLISIHTIQLAKKQRTFNSGAFKDRIILDTKSLKVKHFLDKYLNL</sequence>
<feature type="chain" id="PRO_0000377103" description="tRNA dimethylallyltransferase">
    <location>
        <begin position="1"/>
        <end position="300"/>
    </location>
</feature>
<feature type="region of interest" description="Interaction with substrate tRNA" evidence="1">
    <location>
        <begin position="34"/>
        <end position="37"/>
    </location>
</feature>
<feature type="binding site" evidence="1">
    <location>
        <begin position="9"/>
        <end position="16"/>
    </location>
    <ligand>
        <name>ATP</name>
        <dbReference type="ChEBI" id="CHEBI:30616"/>
    </ligand>
</feature>
<feature type="binding site" evidence="1">
    <location>
        <begin position="11"/>
        <end position="16"/>
    </location>
    <ligand>
        <name>substrate</name>
    </ligand>
</feature>
<feature type="site" description="Interaction with substrate tRNA" evidence="1">
    <location>
        <position position="100"/>
    </location>
</feature>
<keyword id="KW-0067">ATP-binding</keyword>
<keyword id="KW-0460">Magnesium</keyword>
<keyword id="KW-0547">Nucleotide-binding</keyword>
<keyword id="KW-0808">Transferase</keyword>
<keyword id="KW-0819">tRNA processing</keyword>
<dbReference type="EC" id="2.5.1.75" evidence="1"/>
<dbReference type="EMBL" id="CP000487">
    <property type="protein sequence ID" value="ABK82402.1"/>
    <property type="molecule type" value="Genomic_DNA"/>
</dbReference>
<dbReference type="RefSeq" id="WP_002848258.1">
    <property type="nucleotide sequence ID" value="NC_008599.1"/>
</dbReference>
<dbReference type="SMR" id="A0RMI8"/>
<dbReference type="GeneID" id="61064061"/>
<dbReference type="KEGG" id="cff:CFF8240_0216"/>
<dbReference type="eggNOG" id="COG0324">
    <property type="taxonomic scope" value="Bacteria"/>
</dbReference>
<dbReference type="HOGENOM" id="CLU_032616_0_1_7"/>
<dbReference type="Proteomes" id="UP000000760">
    <property type="component" value="Chromosome"/>
</dbReference>
<dbReference type="GO" id="GO:0005524">
    <property type="term" value="F:ATP binding"/>
    <property type="evidence" value="ECO:0007669"/>
    <property type="project" value="UniProtKB-UniRule"/>
</dbReference>
<dbReference type="GO" id="GO:0052381">
    <property type="term" value="F:tRNA dimethylallyltransferase activity"/>
    <property type="evidence" value="ECO:0007669"/>
    <property type="project" value="UniProtKB-UniRule"/>
</dbReference>
<dbReference type="GO" id="GO:0006400">
    <property type="term" value="P:tRNA modification"/>
    <property type="evidence" value="ECO:0007669"/>
    <property type="project" value="TreeGrafter"/>
</dbReference>
<dbReference type="Gene3D" id="1.10.287.890">
    <property type="entry name" value="Crystal structure of tRNA isopentenylpyrophosphate transferase (bh2366) domain"/>
    <property type="match status" value="1"/>
</dbReference>
<dbReference type="Gene3D" id="3.40.50.300">
    <property type="entry name" value="P-loop containing nucleotide triphosphate hydrolases"/>
    <property type="match status" value="1"/>
</dbReference>
<dbReference type="HAMAP" id="MF_00185">
    <property type="entry name" value="IPP_trans"/>
    <property type="match status" value="1"/>
</dbReference>
<dbReference type="InterPro" id="IPR039657">
    <property type="entry name" value="Dimethylallyltransferase"/>
</dbReference>
<dbReference type="InterPro" id="IPR018022">
    <property type="entry name" value="IPT"/>
</dbReference>
<dbReference type="InterPro" id="IPR027417">
    <property type="entry name" value="P-loop_NTPase"/>
</dbReference>
<dbReference type="NCBIfam" id="TIGR00174">
    <property type="entry name" value="miaA"/>
    <property type="match status" value="1"/>
</dbReference>
<dbReference type="PANTHER" id="PTHR11088">
    <property type="entry name" value="TRNA DIMETHYLALLYLTRANSFERASE"/>
    <property type="match status" value="1"/>
</dbReference>
<dbReference type="PANTHER" id="PTHR11088:SF60">
    <property type="entry name" value="TRNA DIMETHYLALLYLTRANSFERASE"/>
    <property type="match status" value="1"/>
</dbReference>
<dbReference type="Pfam" id="PF01715">
    <property type="entry name" value="IPPT"/>
    <property type="match status" value="1"/>
</dbReference>
<dbReference type="SUPFAM" id="SSF52540">
    <property type="entry name" value="P-loop containing nucleoside triphosphate hydrolases"/>
    <property type="match status" value="2"/>
</dbReference>
<comment type="function">
    <text evidence="1">Catalyzes the transfer of a dimethylallyl group onto the adenine at position 37 in tRNAs that read codons beginning with uridine, leading to the formation of N6-(dimethylallyl)adenosine (i(6)A).</text>
</comment>
<comment type="catalytic activity">
    <reaction evidence="1">
        <text>adenosine(37) in tRNA + dimethylallyl diphosphate = N(6)-dimethylallyladenosine(37) in tRNA + diphosphate</text>
        <dbReference type="Rhea" id="RHEA:26482"/>
        <dbReference type="Rhea" id="RHEA-COMP:10162"/>
        <dbReference type="Rhea" id="RHEA-COMP:10375"/>
        <dbReference type="ChEBI" id="CHEBI:33019"/>
        <dbReference type="ChEBI" id="CHEBI:57623"/>
        <dbReference type="ChEBI" id="CHEBI:74411"/>
        <dbReference type="ChEBI" id="CHEBI:74415"/>
        <dbReference type="EC" id="2.5.1.75"/>
    </reaction>
</comment>
<comment type="cofactor">
    <cofactor evidence="1">
        <name>Mg(2+)</name>
        <dbReference type="ChEBI" id="CHEBI:18420"/>
    </cofactor>
</comment>
<comment type="subunit">
    <text evidence="1">Monomer.</text>
</comment>
<comment type="similarity">
    <text evidence="1">Belongs to the IPP transferase family.</text>
</comment>
<name>MIAA_CAMFF</name>
<evidence type="ECO:0000255" key="1">
    <source>
        <dbReference type="HAMAP-Rule" id="MF_00185"/>
    </source>
</evidence>
<protein>
    <recommendedName>
        <fullName evidence="1">tRNA dimethylallyltransferase</fullName>
        <ecNumber evidence="1">2.5.1.75</ecNumber>
    </recommendedName>
    <alternativeName>
        <fullName evidence="1">Dimethylallyl diphosphate:tRNA dimethylallyltransferase</fullName>
        <shortName evidence="1">DMAPP:tRNA dimethylallyltransferase</shortName>
        <shortName evidence="1">DMATase</shortName>
    </alternativeName>
    <alternativeName>
        <fullName evidence="1">Isopentenyl-diphosphate:tRNA isopentenyltransferase</fullName>
        <shortName evidence="1">IPP transferase</shortName>
        <shortName evidence="1">IPPT</shortName>
        <shortName evidence="1">IPTase</shortName>
    </alternativeName>
</protein>
<gene>
    <name evidence="1" type="primary">miaA</name>
    <name type="ordered locus">CFF8240_0216</name>
</gene>
<reference key="1">
    <citation type="submission" date="2006-11" db="EMBL/GenBank/DDBJ databases">
        <title>Sequence of Campylobacter fetus subsp. fetus 82-40.</title>
        <authorList>
            <person name="Fouts D.E."/>
            <person name="Nelson K.E."/>
        </authorList>
    </citation>
    <scope>NUCLEOTIDE SEQUENCE [LARGE SCALE GENOMIC DNA]</scope>
    <source>
        <strain>82-40</strain>
    </source>
</reference>
<accession>A0RMI8</accession>
<organism>
    <name type="scientific">Campylobacter fetus subsp. fetus (strain 82-40)</name>
    <dbReference type="NCBI Taxonomy" id="360106"/>
    <lineage>
        <taxon>Bacteria</taxon>
        <taxon>Pseudomonadati</taxon>
        <taxon>Campylobacterota</taxon>
        <taxon>Epsilonproteobacteria</taxon>
        <taxon>Campylobacterales</taxon>
        <taxon>Campylobacteraceae</taxon>
        <taxon>Campylobacter</taxon>
    </lineage>
</organism>
<proteinExistence type="inferred from homology"/>